<evidence type="ECO:0000255" key="1">
    <source>
        <dbReference type="HAMAP-Rule" id="MF_03153"/>
    </source>
</evidence>
<evidence type="ECO:0000256" key="2">
    <source>
        <dbReference type="SAM" id="MobiDB-lite"/>
    </source>
</evidence>
<evidence type="ECO:0000269" key="3">
    <source>
    </source>
</evidence>
<organism>
    <name type="scientific">Xenopus laevis</name>
    <name type="common">African clawed frog</name>
    <dbReference type="NCBI Taxonomy" id="8355"/>
    <lineage>
        <taxon>Eukaryota</taxon>
        <taxon>Metazoa</taxon>
        <taxon>Chordata</taxon>
        <taxon>Craniata</taxon>
        <taxon>Vertebrata</taxon>
        <taxon>Euteleostomi</taxon>
        <taxon>Amphibia</taxon>
        <taxon>Batrachia</taxon>
        <taxon>Anura</taxon>
        <taxon>Pipoidea</taxon>
        <taxon>Pipidae</taxon>
        <taxon>Xenopodinae</taxon>
        <taxon>Xenopus</taxon>
        <taxon>Xenopus</taxon>
    </lineage>
</organism>
<gene>
    <name evidence="1" type="primary">snrpc</name>
    <name type="synonym">snrp1c</name>
</gene>
<keyword id="KW-0479">Metal-binding</keyword>
<keyword id="KW-0539">Nucleus</keyword>
<keyword id="KW-1185">Reference proteome</keyword>
<keyword id="KW-0687">Ribonucleoprotein</keyword>
<keyword id="KW-0694">RNA-binding</keyword>
<keyword id="KW-0862">Zinc</keyword>
<keyword id="KW-0863">Zinc-finger</keyword>
<name>RU1C_XENLA</name>
<protein>
    <recommendedName>
        <fullName evidence="1">U1 small nuclear ribonucleoprotein C</fullName>
        <shortName evidence="1">U1 snRNP C</shortName>
        <shortName evidence="1">U1-C</shortName>
        <shortName evidence="1">U1C</shortName>
    </recommendedName>
</protein>
<comment type="function">
    <text evidence="1">Component of the spliceosomal U1 snRNP, which is essential for recognition of the pre-mRNA 5' splice-site and the subsequent assembly of the spliceosome. SNRPC/U1-C is directly involved in initial 5' splice-site recognition for both constitutive and regulated alternative splicing. The interaction with the 5' splice-site seems to precede base-pairing between the pre-mRNA and the U1 snRNA. Stimulates commitment or early (E) complex formation by stabilizing the base pairing of the 5' end of the U1 snRNA and the 5' splice-site region.</text>
</comment>
<comment type="subunit">
    <text evidence="1">Component of the U1 snRNP. The U1 snRNP is composed of the U1 snRNA and the 7 core Sm proteins snrpb, snrpd1, snrpd2, snrpd3, snrpe, snrpf and snrpg that assemble in a heptameric protein ring on the Sm site of the small nuclear RNA to form the core snRNP, and at least 3 U1 snRNP-specific proteins snrnp70/U1-70K, snrpa/U1-A and snrpc/U1-C. snrpc/U1-C interacts with U1 snRNA and the 5' splice-site region of the pre-mRNA.</text>
</comment>
<comment type="subcellular location">
    <subcellularLocation>
        <location evidence="1 3">Nucleus</location>
    </subcellularLocation>
</comment>
<comment type="similarity">
    <text evidence="1">Belongs to the U1 small nuclear ribonucleoprotein C family.</text>
</comment>
<feature type="chain" id="PRO_0000097527" description="U1 small nuclear ribonucleoprotein C">
    <location>
        <begin position="1"/>
        <end position="159"/>
    </location>
</feature>
<feature type="zinc finger region" description="Matrin-type" evidence="1">
    <location>
        <begin position="4"/>
        <end position="36"/>
    </location>
</feature>
<feature type="region of interest" description="Disordered" evidence="2">
    <location>
        <begin position="63"/>
        <end position="95"/>
    </location>
</feature>
<feature type="region of interest" description="Disordered" evidence="2">
    <location>
        <begin position="139"/>
        <end position="159"/>
    </location>
</feature>
<feature type="compositionally biased region" description="Pro residues" evidence="2">
    <location>
        <begin position="77"/>
        <end position="95"/>
    </location>
</feature>
<proteinExistence type="evidence at transcript level"/>
<reference key="1">
    <citation type="journal article" date="1992" name="J. Cell Biol.">
        <title>Assembly and localization of the U1-specific snRNP C protein in the amphibian oocyte.</title>
        <authorList>
            <person name="Jantsch M.F."/>
            <person name="Gall J.G."/>
        </authorList>
    </citation>
    <scope>NUCLEOTIDE SEQUENCE [MRNA]</scope>
    <scope>SUBCELLULAR LOCATION</scope>
    <source>
        <tissue>Ovary</tissue>
    </source>
</reference>
<reference key="2">
    <citation type="submission" date="2004-10" db="EMBL/GenBank/DDBJ databases">
        <authorList>
            <consortium name="NIH - Xenopus Gene Collection (XGC) project"/>
        </authorList>
    </citation>
    <scope>NUCLEOTIDE SEQUENCE [LARGE SCALE MRNA]</scope>
    <source>
        <tissue>Ovary</tissue>
    </source>
</reference>
<accession>Q03369</accession>
<accession>Q5XH67</accession>
<sequence length="159" mass="17373">MPKFYCDYCDTYLTHDSPSVRKTHCSGRKHKENVKDYYQKWMEEQAQSLIDKTTAAFQQGKIPPTPFAAPPAGSAMIPPPPSLGGPPRPGMMPAPPMAGPPMMPMMGPPPPGMMPVGHGPGMRPPMGAHMPMMPGPPMMRPPTRPMMLQSRPGMARPDR</sequence>
<dbReference type="EMBL" id="X63892">
    <property type="protein sequence ID" value="CAA45354.1"/>
    <property type="molecule type" value="mRNA"/>
</dbReference>
<dbReference type="EMBL" id="BC084206">
    <property type="protein sequence ID" value="AAH84206.1"/>
    <property type="molecule type" value="mRNA"/>
</dbReference>
<dbReference type="PIR" id="A44263">
    <property type="entry name" value="A44263"/>
</dbReference>
<dbReference type="RefSeq" id="NP_001084130.1">
    <property type="nucleotide sequence ID" value="NM_001090661.1"/>
</dbReference>
<dbReference type="SMR" id="Q03369"/>
<dbReference type="DNASU" id="399324"/>
<dbReference type="GeneID" id="399324"/>
<dbReference type="KEGG" id="xla:399324"/>
<dbReference type="AGR" id="Xenbase:XB-GENE-866414"/>
<dbReference type="CTD" id="399324"/>
<dbReference type="Xenbase" id="XB-GENE-866414">
    <property type="gene designation" value="snrpc.S"/>
</dbReference>
<dbReference type="OMA" id="QMRPPLM"/>
<dbReference type="OrthoDB" id="76567at2759"/>
<dbReference type="Proteomes" id="UP000186698">
    <property type="component" value="Chromosome 2S"/>
</dbReference>
<dbReference type="Bgee" id="399324">
    <property type="expression patterns" value="Expressed in egg cell and 19 other cell types or tissues"/>
</dbReference>
<dbReference type="GO" id="GO:0000243">
    <property type="term" value="C:commitment complex"/>
    <property type="evidence" value="ECO:0007669"/>
    <property type="project" value="UniProtKB-UniRule"/>
</dbReference>
<dbReference type="GO" id="GO:0005685">
    <property type="term" value="C:U1 snRNP"/>
    <property type="evidence" value="ECO:0000250"/>
    <property type="project" value="UniProtKB"/>
</dbReference>
<dbReference type="GO" id="GO:0071004">
    <property type="term" value="C:U2-type prespliceosome"/>
    <property type="evidence" value="ECO:0007669"/>
    <property type="project" value="UniProtKB-UniRule"/>
</dbReference>
<dbReference type="GO" id="GO:0003729">
    <property type="term" value="F:mRNA binding"/>
    <property type="evidence" value="ECO:0007669"/>
    <property type="project" value="UniProtKB-UniRule"/>
</dbReference>
<dbReference type="GO" id="GO:0030627">
    <property type="term" value="F:pre-mRNA 5'-splice site binding"/>
    <property type="evidence" value="ECO:0000318"/>
    <property type="project" value="GO_Central"/>
</dbReference>
<dbReference type="GO" id="GO:0030619">
    <property type="term" value="F:U1 snRNA binding"/>
    <property type="evidence" value="ECO:0007669"/>
    <property type="project" value="UniProtKB-UniRule"/>
</dbReference>
<dbReference type="GO" id="GO:0008270">
    <property type="term" value="F:zinc ion binding"/>
    <property type="evidence" value="ECO:0007669"/>
    <property type="project" value="UniProtKB-UniRule"/>
</dbReference>
<dbReference type="GO" id="GO:0000395">
    <property type="term" value="P:mRNA 5'-splice site recognition"/>
    <property type="evidence" value="ECO:0000318"/>
    <property type="project" value="GO_Central"/>
</dbReference>
<dbReference type="GO" id="GO:0000387">
    <property type="term" value="P:spliceosomal snRNP assembly"/>
    <property type="evidence" value="ECO:0007669"/>
    <property type="project" value="UniProtKB-UniRule"/>
</dbReference>
<dbReference type="FunFam" id="3.30.160.60:FF:000059">
    <property type="entry name" value="U1 small nuclear ribonucleoprotein C"/>
    <property type="match status" value="1"/>
</dbReference>
<dbReference type="Gene3D" id="3.30.160.60">
    <property type="entry name" value="Classic Zinc Finger"/>
    <property type="match status" value="1"/>
</dbReference>
<dbReference type="HAMAP" id="MF_03153">
    <property type="entry name" value="U1_C"/>
    <property type="match status" value="1"/>
</dbReference>
<dbReference type="InterPro" id="IPR000690">
    <property type="entry name" value="Matrin/U1-C_Znf_C2H2"/>
</dbReference>
<dbReference type="InterPro" id="IPR003604">
    <property type="entry name" value="Matrin/U1-like-C_Znf_C2H2"/>
</dbReference>
<dbReference type="InterPro" id="IPR013085">
    <property type="entry name" value="U1-CZ_Znf_C2H2"/>
</dbReference>
<dbReference type="InterPro" id="IPR017340">
    <property type="entry name" value="U1_snRNP-C"/>
</dbReference>
<dbReference type="InterPro" id="IPR036236">
    <property type="entry name" value="Znf_C2H2_sf"/>
</dbReference>
<dbReference type="PANTHER" id="PTHR31148">
    <property type="entry name" value="U1 SMALL NUCLEAR RIBONUCLEOPROTEIN C"/>
    <property type="match status" value="1"/>
</dbReference>
<dbReference type="PANTHER" id="PTHR31148:SF1">
    <property type="entry name" value="U1 SMALL NUCLEAR RIBONUCLEOPROTEIN C"/>
    <property type="match status" value="1"/>
</dbReference>
<dbReference type="Pfam" id="PF06220">
    <property type="entry name" value="zf-U1"/>
    <property type="match status" value="1"/>
</dbReference>
<dbReference type="PIRSF" id="PIRSF037969">
    <property type="entry name" value="U1_snRNP-C"/>
    <property type="match status" value="1"/>
</dbReference>
<dbReference type="SMART" id="SM00451">
    <property type="entry name" value="ZnF_U1"/>
    <property type="match status" value="1"/>
</dbReference>
<dbReference type="SUPFAM" id="SSF57667">
    <property type="entry name" value="beta-beta-alpha zinc fingers"/>
    <property type="match status" value="1"/>
</dbReference>
<dbReference type="PROSITE" id="PS50171">
    <property type="entry name" value="ZF_MATRIN"/>
    <property type="match status" value="1"/>
</dbReference>